<evidence type="ECO:0000255" key="1">
    <source>
        <dbReference type="HAMAP-Rule" id="MF_00454"/>
    </source>
</evidence>
<proteinExistence type="inferred from homology"/>
<protein>
    <recommendedName>
        <fullName evidence="1">Fluoride-specific ion channel FluC</fullName>
    </recommendedName>
</protein>
<organism>
    <name type="scientific">Shewanella sediminis (strain HAW-EB3)</name>
    <dbReference type="NCBI Taxonomy" id="425104"/>
    <lineage>
        <taxon>Bacteria</taxon>
        <taxon>Pseudomonadati</taxon>
        <taxon>Pseudomonadota</taxon>
        <taxon>Gammaproteobacteria</taxon>
        <taxon>Alteromonadales</taxon>
        <taxon>Shewanellaceae</taxon>
        <taxon>Shewanella</taxon>
    </lineage>
</organism>
<sequence length="124" mass="13397">MNNILFVALGGSIGAVFRYLLSIFMLQLFGSAFPFGTLLVNVIGSFLMGTIYALGQVSQVSPEIKALVGVGLLGALTTFSTFSNETLLLIQSGAWIKAFFNIALNLCLCIFMVYLGQQLVFSRI</sequence>
<dbReference type="EMBL" id="CP000821">
    <property type="protein sequence ID" value="ABV36739.1"/>
    <property type="molecule type" value="Genomic_DNA"/>
</dbReference>
<dbReference type="RefSeq" id="WP_012142474.1">
    <property type="nucleotide sequence ID" value="NC_009831.1"/>
</dbReference>
<dbReference type="SMR" id="A8FV66"/>
<dbReference type="STRING" id="425104.Ssed_2130"/>
<dbReference type="KEGG" id="sse:Ssed_2130"/>
<dbReference type="eggNOG" id="COG0239">
    <property type="taxonomic scope" value="Bacteria"/>
</dbReference>
<dbReference type="HOGENOM" id="CLU_114342_2_3_6"/>
<dbReference type="OrthoDB" id="9806299at2"/>
<dbReference type="Proteomes" id="UP000002015">
    <property type="component" value="Chromosome"/>
</dbReference>
<dbReference type="GO" id="GO:0005886">
    <property type="term" value="C:plasma membrane"/>
    <property type="evidence" value="ECO:0007669"/>
    <property type="project" value="UniProtKB-SubCell"/>
</dbReference>
<dbReference type="GO" id="GO:0062054">
    <property type="term" value="F:fluoride channel activity"/>
    <property type="evidence" value="ECO:0007669"/>
    <property type="project" value="UniProtKB-UniRule"/>
</dbReference>
<dbReference type="GO" id="GO:0046872">
    <property type="term" value="F:metal ion binding"/>
    <property type="evidence" value="ECO:0007669"/>
    <property type="project" value="UniProtKB-KW"/>
</dbReference>
<dbReference type="GO" id="GO:0140114">
    <property type="term" value="P:cellular detoxification of fluoride"/>
    <property type="evidence" value="ECO:0007669"/>
    <property type="project" value="UniProtKB-UniRule"/>
</dbReference>
<dbReference type="HAMAP" id="MF_00454">
    <property type="entry name" value="FluC"/>
    <property type="match status" value="1"/>
</dbReference>
<dbReference type="InterPro" id="IPR003691">
    <property type="entry name" value="FluC"/>
</dbReference>
<dbReference type="NCBIfam" id="TIGR00494">
    <property type="entry name" value="crcB"/>
    <property type="match status" value="1"/>
</dbReference>
<dbReference type="PANTHER" id="PTHR28259">
    <property type="entry name" value="FLUORIDE EXPORT PROTEIN 1-RELATED"/>
    <property type="match status" value="1"/>
</dbReference>
<dbReference type="PANTHER" id="PTHR28259:SF1">
    <property type="entry name" value="FLUORIDE EXPORT PROTEIN 1-RELATED"/>
    <property type="match status" value="1"/>
</dbReference>
<dbReference type="Pfam" id="PF02537">
    <property type="entry name" value="CRCB"/>
    <property type="match status" value="1"/>
</dbReference>
<feature type="chain" id="PRO_1000081022" description="Fluoride-specific ion channel FluC">
    <location>
        <begin position="1"/>
        <end position="124"/>
    </location>
</feature>
<feature type="transmembrane region" description="Helical" evidence="1">
    <location>
        <begin position="5"/>
        <end position="27"/>
    </location>
</feature>
<feature type="transmembrane region" description="Helical" evidence="1">
    <location>
        <begin position="70"/>
        <end position="90"/>
    </location>
</feature>
<feature type="transmembrane region" description="Helical" evidence="1">
    <location>
        <begin position="95"/>
        <end position="115"/>
    </location>
</feature>
<feature type="binding site" evidence="1">
    <location>
        <position position="74"/>
    </location>
    <ligand>
        <name>Na(+)</name>
        <dbReference type="ChEBI" id="CHEBI:29101"/>
        <note>structural</note>
    </ligand>
</feature>
<feature type="binding site" evidence="1">
    <location>
        <position position="77"/>
    </location>
    <ligand>
        <name>Na(+)</name>
        <dbReference type="ChEBI" id="CHEBI:29101"/>
        <note>structural</note>
    </ligand>
</feature>
<keyword id="KW-0997">Cell inner membrane</keyword>
<keyword id="KW-1003">Cell membrane</keyword>
<keyword id="KW-0407">Ion channel</keyword>
<keyword id="KW-0406">Ion transport</keyword>
<keyword id="KW-0472">Membrane</keyword>
<keyword id="KW-0479">Metal-binding</keyword>
<keyword id="KW-1185">Reference proteome</keyword>
<keyword id="KW-0915">Sodium</keyword>
<keyword id="KW-0812">Transmembrane</keyword>
<keyword id="KW-1133">Transmembrane helix</keyword>
<keyword id="KW-0813">Transport</keyword>
<gene>
    <name evidence="1" type="primary">fluC</name>
    <name evidence="1" type="synonym">crcB</name>
    <name type="ordered locus">Ssed_2130</name>
</gene>
<reference key="1">
    <citation type="submission" date="2007-08" db="EMBL/GenBank/DDBJ databases">
        <title>Complete sequence of Shewanella sediminis HAW-EB3.</title>
        <authorList>
            <consortium name="US DOE Joint Genome Institute"/>
            <person name="Copeland A."/>
            <person name="Lucas S."/>
            <person name="Lapidus A."/>
            <person name="Barry K."/>
            <person name="Glavina del Rio T."/>
            <person name="Dalin E."/>
            <person name="Tice H."/>
            <person name="Pitluck S."/>
            <person name="Chertkov O."/>
            <person name="Brettin T."/>
            <person name="Bruce D."/>
            <person name="Detter J.C."/>
            <person name="Han C."/>
            <person name="Schmutz J."/>
            <person name="Larimer F."/>
            <person name="Land M."/>
            <person name="Hauser L."/>
            <person name="Kyrpides N."/>
            <person name="Kim E."/>
            <person name="Zhao J.-S."/>
            <person name="Richardson P."/>
        </authorList>
    </citation>
    <scope>NUCLEOTIDE SEQUENCE [LARGE SCALE GENOMIC DNA]</scope>
    <source>
        <strain>HAW-EB3</strain>
    </source>
</reference>
<comment type="function">
    <text evidence="1">Fluoride-specific ion channel. Important for reducing fluoride concentration in the cell, thus reducing its toxicity.</text>
</comment>
<comment type="catalytic activity">
    <reaction evidence="1">
        <text>fluoride(in) = fluoride(out)</text>
        <dbReference type="Rhea" id="RHEA:76159"/>
        <dbReference type="ChEBI" id="CHEBI:17051"/>
    </reaction>
    <physiologicalReaction direction="left-to-right" evidence="1">
        <dbReference type="Rhea" id="RHEA:76160"/>
    </physiologicalReaction>
</comment>
<comment type="activity regulation">
    <text evidence="1">Na(+) is not transported, but it plays an essential structural role and its presence is essential for fluoride channel function.</text>
</comment>
<comment type="subcellular location">
    <subcellularLocation>
        <location evidence="1">Cell inner membrane</location>
        <topology evidence="1">Multi-pass membrane protein</topology>
    </subcellularLocation>
</comment>
<comment type="similarity">
    <text evidence="1">Belongs to the fluoride channel Fluc/FEX (TC 1.A.43) family.</text>
</comment>
<accession>A8FV66</accession>
<name>FLUC_SHESH</name>